<evidence type="ECO:0000255" key="1">
    <source>
        <dbReference type="HAMAP-Rule" id="MF_01208"/>
    </source>
</evidence>
<reference key="1">
    <citation type="submission" date="2007-11" db="EMBL/GenBank/DDBJ databases">
        <title>Complete genome sequence of Clostridium phytofermentans ISDg.</title>
        <authorList>
            <person name="Leschine S.B."/>
            <person name="Warnick T.A."/>
            <person name="Blanchard J.L."/>
            <person name="Schnell D.J."/>
            <person name="Petit E.L."/>
            <person name="LaTouf W.G."/>
            <person name="Copeland A."/>
            <person name="Lucas S."/>
            <person name="Lapidus A."/>
            <person name="Barry K."/>
            <person name="Glavina del Rio T."/>
            <person name="Dalin E."/>
            <person name="Tice H."/>
            <person name="Pitluck S."/>
            <person name="Kiss H."/>
            <person name="Brettin T."/>
            <person name="Bruce D."/>
            <person name="Detter J.C."/>
            <person name="Han C."/>
            <person name="Kuske C."/>
            <person name="Schmutz J."/>
            <person name="Larimer F."/>
            <person name="Land M."/>
            <person name="Hauser L."/>
            <person name="Kyrpides N."/>
            <person name="Kim E.A."/>
            <person name="Richardson P."/>
        </authorList>
    </citation>
    <scope>NUCLEOTIDE SEQUENCE [LARGE SCALE GENOMIC DNA]</scope>
    <source>
        <strain>ATCC 700394 / DSM 18823 / ISDg</strain>
    </source>
</reference>
<feature type="chain" id="PRO_1000085543" description="Orotate phosphoribosyltransferase">
    <location>
        <begin position="1"/>
        <end position="225"/>
    </location>
</feature>
<feature type="binding site" description="in other chain" evidence="1">
    <location>
        <position position="26"/>
    </location>
    <ligand>
        <name>5-phospho-alpha-D-ribose 1-diphosphate</name>
        <dbReference type="ChEBI" id="CHEBI:58017"/>
        <note>ligand shared between dimeric partners</note>
    </ligand>
</feature>
<feature type="binding site" description="in other chain" evidence="1">
    <location>
        <begin position="73"/>
        <end position="74"/>
    </location>
    <ligand>
        <name>5-phospho-alpha-D-ribose 1-diphosphate</name>
        <dbReference type="ChEBI" id="CHEBI:58017"/>
        <note>ligand shared between dimeric partners</note>
    </ligand>
</feature>
<feature type="binding site" evidence="1">
    <location>
        <position position="100"/>
    </location>
    <ligand>
        <name>5-phospho-alpha-D-ribose 1-diphosphate</name>
        <dbReference type="ChEBI" id="CHEBI:58017"/>
        <note>ligand shared between dimeric partners</note>
    </ligand>
</feature>
<feature type="binding site" description="in other chain" evidence="1">
    <location>
        <position position="101"/>
    </location>
    <ligand>
        <name>5-phospho-alpha-D-ribose 1-diphosphate</name>
        <dbReference type="ChEBI" id="CHEBI:58017"/>
        <note>ligand shared between dimeric partners</note>
    </ligand>
</feature>
<feature type="binding site" evidence="1">
    <location>
        <position position="104"/>
    </location>
    <ligand>
        <name>5-phospho-alpha-D-ribose 1-diphosphate</name>
        <dbReference type="ChEBI" id="CHEBI:58017"/>
        <note>ligand shared between dimeric partners</note>
    </ligand>
</feature>
<feature type="binding site" evidence="1">
    <location>
        <position position="106"/>
    </location>
    <ligand>
        <name>5-phospho-alpha-D-ribose 1-diphosphate</name>
        <dbReference type="ChEBI" id="CHEBI:58017"/>
        <note>ligand shared between dimeric partners</note>
    </ligand>
</feature>
<feature type="binding site" description="in other chain" evidence="1">
    <location>
        <begin position="127"/>
        <end position="135"/>
    </location>
    <ligand>
        <name>5-phospho-alpha-D-ribose 1-diphosphate</name>
        <dbReference type="ChEBI" id="CHEBI:58017"/>
        <note>ligand shared between dimeric partners</note>
    </ligand>
</feature>
<feature type="binding site" evidence="1">
    <location>
        <position position="131"/>
    </location>
    <ligand>
        <name>orotate</name>
        <dbReference type="ChEBI" id="CHEBI:30839"/>
    </ligand>
</feature>
<feature type="binding site" evidence="1">
    <location>
        <position position="160"/>
    </location>
    <ligand>
        <name>orotate</name>
        <dbReference type="ChEBI" id="CHEBI:30839"/>
    </ligand>
</feature>
<keyword id="KW-0328">Glycosyltransferase</keyword>
<keyword id="KW-0460">Magnesium</keyword>
<keyword id="KW-0665">Pyrimidine biosynthesis</keyword>
<keyword id="KW-1185">Reference proteome</keyword>
<keyword id="KW-0808">Transferase</keyword>
<accession>A9KKR4</accession>
<name>PYRE_LACP7</name>
<protein>
    <recommendedName>
        <fullName evidence="1">Orotate phosphoribosyltransferase</fullName>
        <shortName evidence="1">OPRT</shortName>
        <shortName evidence="1">OPRTase</shortName>
        <ecNumber evidence="1">2.4.2.10</ecNumber>
    </recommendedName>
</protein>
<comment type="function">
    <text evidence="1">Catalyzes the transfer of a ribosyl phosphate group from 5-phosphoribose 1-diphosphate to orotate, leading to the formation of orotidine monophosphate (OMP).</text>
</comment>
<comment type="catalytic activity">
    <reaction evidence="1">
        <text>orotidine 5'-phosphate + diphosphate = orotate + 5-phospho-alpha-D-ribose 1-diphosphate</text>
        <dbReference type="Rhea" id="RHEA:10380"/>
        <dbReference type="ChEBI" id="CHEBI:30839"/>
        <dbReference type="ChEBI" id="CHEBI:33019"/>
        <dbReference type="ChEBI" id="CHEBI:57538"/>
        <dbReference type="ChEBI" id="CHEBI:58017"/>
        <dbReference type="EC" id="2.4.2.10"/>
    </reaction>
</comment>
<comment type="cofactor">
    <cofactor evidence="1">
        <name>Mg(2+)</name>
        <dbReference type="ChEBI" id="CHEBI:18420"/>
    </cofactor>
</comment>
<comment type="pathway">
    <text evidence="1">Pyrimidine metabolism; UMP biosynthesis via de novo pathway; UMP from orotate: step 1/2.</text>
</comment>
<comment type="subunit">
    <text evidence="1">Homodimer.</text>
</comment>
<comment type="similarity">
    <text evidence="1">Belongs to the purine/pyrimidine phosphoribosyltransferase family. PyrE subfamily.</text>
</comment>
<gene>
    <name evidence="1" type="primary">pyrE</name>
    <name type="ordered locus">Cphy_2285</name>
</gene>
<dbReference type="EC" id="2.4.2.10" evidence="1"/>
<dbReference type="EMBL" id="CP000885">
    <property type="protein sequence ID" value="ABX42646.1"/>
    <property type="molecule type" value="Genomic_DNA"/>
</dbReference>
<dbReference type="RefSeq" id="WP_012200300.1">
    <property type="nucleotide sequence ID" value="NC_010001.1"/>
</dbReference>
<dbReference type="SMR" id="A9KKR4"/>
<dbReference type="STRING" id="357809.Cphy_2285"/>
<dbReference type="KEGG" id="cpy:Cphy_2285"/>
<dbReference type="eggNOG" id="COG0461">
    <property type="taxonomic scope" value="Bacteria"/>
</dbReference>
<dbReference type="HOGENOM" id="CLU_074878_0_1_9"/>
<dbReference type="OrthoDB" id="9802134at2"/>
<dbReference type="UniPathway" id="UPA00070">
    <property type="reaction ID" value="UER00119"/>
</dbReference>
<dbReference type="Proteomes" id="UP000000370">
    <property type="component" value="Chromosome"/>
</dbReference>
<dbReference type="GO" id="GO:0005737">
    <property type="term" value="C:cytoplasm"/>
    <property type="evidence" value="ECO:0007669"/>
    <property type="project" value="TreeGrafter"/>
</dbReference>
<dbReference type="GO" id="GO:0000287">
    <property type="term" value="F:magnesium ion binding"/>
    <property type="evidence" value="ECO:0007669"/>
    <property type="project" value="UniProtKB-UniRule"/>
</dbReference>
<dbReference type="GO" id="GO:0004588">
    <property type="term" value="F:orotate phosphoribosyltransferase activity"/>
    <property type="evidence" value="ECO:0007669"/>
    <property type="project" value="UniProtKB-UniRule"/>
</dbReference>
<dbReference type="GO" id="GO:0006207">
    <property type="term" value="P:'de novo' pyrimidine nucleobase biosynthetic process"/>
    <property type="evidence" value="ECO:0007669"/>
    <property type="project" value="TreeGrafter"/>
</dbReference>
<dbReference type="GO" id="GO:0044205">
    <property type="term" value="P:'de novo' UMP biosynthetic process"/>
    <property type="evidence" value="ECO:0007669"/>
    <property type="project" value="UniProtKB-UniRule"/>
</dbReference>
<dbReference type="GO" id="GO:0046132">
    <property type="term" value="P:pyrimidine ribonucleoside biosynthetic process"/>
    <property type="evidence" value="ECO:0007669"/>
    <property type="project" value="TreeGrafter"/>
</dbReference>
<dbReference type="CDD" id="cd06223">
    <property type="entry name" value="PRTases_typeI"/>
    <property type="match status" value="1"/>
</dbReference>
<dbReference type="Gene3D" id="3.40.50.2020">
    <property type="match status" value="1"/>
</dbReference>
<dbReference type="HAMAP" id="MF_01208">
    <property type="entry name" value="PyrE"/>
    <property type="match status" value="1"/>
</dbReference>
<dbReference type="InterPro" id="IPR023031">
    <property type="entry name" value="OPRT"/>
</dbReference>
<dbReference type="InterPro" id="IPR004467">
    <property type="entry name" value="Or_phspho_trans_dom"/>
</dbReference>
<dbReference type="InterPro" id="IPR000836">
    <property type="entry name" value="PRibTrfase_dom"/>
</dbReference>
<dbReference type="InterPro" id="IPR029057">
    <property type="entry name" value="PRTase-like"/>
</dbReference>
<dbReference type="NCBIfam" id="TIGR00336">
    <property type="entry name" value="pyrE"/>
    <property type="match status" value="1"/>
</dbReference>
<dbReference type="PANTHER" id="PTHR46683">
    <property type="entry name" value="OROTATE PHOSPHORIBOSYLTRANSFERASE 1-RELATED"/>
    <property type="match status" value="1"/>
</dbReference>
<dbReference type="PANTHER" id="PTHR46683:SF1">
    <property type="entry name" value="OROTATE PHOSPHORIBOSYLTRANSFERASE 1-RELATED"/>
    <property type="match status" value="1"/>
</dbReference>
<dbReference type="Pfam" id="PF00156">
    <property type="entry name" value="Pribosyltran"/>
    <property type="match status" value="1"/>
</dbReference>
<dbReference type="SUPFAM" id="SSF53271">
    <property type="entry name" value="PRTase-like"/>
    <property type="match status" value="1"/>
</dbReference>
<organism>
    <name type="scientific">Lachnoclostridium phytofermentans (strain ATCC 700394 / DSM 18823 / ISDg)</name>
    <name type="common">Clostridium phytofermentans</name>
    <dbReference type="NCBI Taxonomy" id="357809"/>
    <lineage>
        <taxon>Bacteria</taxon>
        <taxon>Bacillati</taxon>
        <taxon>Bacillota</taxon>
        <taxon>Clostridia</taxon>
        <taxon>Lachnospirales</taxon>
        <taxon>Lachnospiraceae</taxon>
    </lineage>
</organism>
<proteinExistence type="inferred from homology"/>
<sequence length="225" mass="24899">MEQYKKEFIEFMVDCGVLKFGDFTTKSGRKTPFFVNTGFYRTGAQLRKLGEYYAKAIHDAYGLDFDVLFGPAYKGIPLSVATAMSISEHFDKDIKYCSNRKEVKDHGDTGILLGSPISDGDKVVIIEDVTTAGTSIGETMPILSAQGNVDVVGLVVSVDRMERGQGKKSALKEIEENYGIETTAIVTMKEVVEHLYGKPYNGKVVIDDQLKQAIDAYYEQYGVEA</sequence>